<sequence length="366" mass="40664">MNNNYHIAVLPGDGIGPETTRQVYKILNVIKKQFQINIVTTEHKIGGDAINSEGTPFPKSTLKYCEQSNAILFGAVGGPQWTHLKGSESPEQGALLALRKHFNLFANLRPIYLADELKELSPLNINMIPNGIDIIFVRELTGGIYFGQPKGRSGTGLNEYAFDTAVYHRFEIERIANIAFKLAQKRRKRVSSIDKANVLHTSMLWREVVSHLAKNYPDVELEHLYIDNASMQLINNPSKFDIILCPNLFGDILSDECAMISGSIGMLPSASINEHNFGLYEPAGGSAPDIAEKNIANPIAHILSIALLFRYSLKLDHIAIKIEKAVSQALMLGYRTIDIAKKHEKSISTNEMGDIIAALIKNEREK</sequence>
<organism>
    <name type="scientific">Blochmanniella pennsylvanica (strain BPEN)</name>
    <dbReference type="NCBI Taxonomy" id="291272"/>
    <lineage>
        <taxon>Bacteria</taxon>
        <taxon>Pseudomonadati</taxon>
        <taxon>Pseudomonadota</taxon>
        <taxon>Gammaproteobacteria</taxon>
        <taxon>Enterobacterales</taxon>
        <taxon>Enterobacteriaceae</taxon>
        <taxon>ant endosymbionts</taxon>
        <taxon>Candidatus Blochmanniella</taxon>
    </lineage>
</organism>
<evidence type="ECO:0000255" key="1">
    <source>
        <dbReference type="HAMAP-Rule" id="MF_01033"/>
    </source>
</evidence>
<keyword id="KW-0028">Amino-acid biosynthesis</keyword>
<keyword id="KW-0100">Branched-chain amino acid biosynthesis</keyword>
<keyword id="KW-0963">Cytoplasm</keyword>
<keyword id="KW-0432">Leucine biosynthesis</keyword>
<keyword id="KW-0460">Magnesium</keyword>
<keyword id="KW-0464">Manganese</keyword>
<keyword id="KW-0479">Metal-binding</keyword>
<keyword id="KW-0520">NAD</keyword>
<keyword id="KW-0560">Oxidoreductase</keyword>
<keyword id="KW-1185">Reference proteome</keyword>
<reference key="1">
    <citation type="journal article" date="2005" name="Genome Res.">
        <title>Genome sequence of Blochmannia pennsylvanicus indicates parallel evolutionary trends among bacterial mutualists of insects.</title>
        <authorList>
            <person name="Degnan P.H."/>
            <person name="Lazarus A.B."/>
            <person name="Wernegreen J.J."/>
        </authorList>
    </citation>
    <scope>NUCLEOTIDE SEQUENCE [LARGE SCALE GENOMIC DNA]</scope>
    <source>
        <strain>BPEN</strain>
    </source>
</reference>
<comment type="function">
    <text evidence="1">Catalyzes the oxidation of 3-carboxy-2-hydroxy-4-methylpentanoate (3-isopropylmalate) to 3-carboxy-4-methyl-2-oxopentanoate. The product decarboxylates to 4-methyl-2 oxopentanoate.</text>
</comment>
<comment type="catalytic activity">
    <reaction evidence="1">
        <text>(2R,3S)-3-isopropylmalate + NAD(+) = 4-methyl-2-oxopentanoate + CO2 + NADH</text>
        <dbReference type="Rhea" id="RHEA:32271"/>
        <dbReference type="ChEBI" id="CHEBI:16526"/>
        <dbReference type="ChEBI" id="CHEBI:17865"/>
        <dbReference type="ChEBI" id="CHEBI:35121"/>
        <dbReference type="ChEBI" id="CHEBI:57540"/>
        <dbReference type="ChEBI" id="CHEBI:57945"/>
        <dbReference type="EC" id="1.1.1.85"/>
    </reaction>
</comment>
<comment type="cofactor">
    <cofactor evidence="1">
        <name>Mg(2+)</name>
        <dbReference type="ChEBI" id="CHEBI:18420"/>
    </cofactor>
    <cofactor evidence="1">
        <name>Mn(2+)</name>
        <dbReference type="ChEBI" id="CHEBI:29035"/>
    </cofactor>
    <text evidence="1">Binds 1 Mg(2+) or Mn(2+) ion per subunit.</text>
</comment>
<comment type="pathway">
    <text evidence="1">Amino-acid biosynthesis; L-leucine biosynthesis; L-leucine from 3-methyl-2-oxobutanoate: step 3/4.</text>
</comment>
<comment type="subunit">
    <text evidence="1">Homodimer.</text>
</comment>
<comment type="subcellular location">
    <subcellularLocation>
        <location evidence="1">Cytoplasm</location>
    </subcellularLocation>
</comment>
<comment type="similarity">
    <text evidence="1">Belongs to the isocitrate and isopropylmalate dehydrogenases family. LeuB type 1 subfamily.</text>
</comment>
<proteinExistence type="inferred from homology"/>
<name>LEU3_BLOPB</name>
<feature type="chain" id="PRO_0000083648" description="3-isopropylmalate dehydrogenase">
    <location>
        <begin position="1"/>
        <end position="366"/>
    </location>
</feature>
<feature type="binding site" evidence="1">
    <location>
        <begin position="78"/>
        <end position="91"/>
    </location>
    <ligand>
        <name>NAD(+)</name>
        <dbReference type="ChEBI" id="CHEBI:57540"/>
    </ligand>
</feature>
<feature type="binding site" evidence="1">
    <location>
        <position position="99"/>
    </location>
    <ligand>
        <name>substrate</name>
    </ligand>
</feature>
<feature type="binding site" evidence="1">
    <location>
        <position position="109"/>
    </location>
    <ligand>
        <name>substrate</name>
    </ligand>
</feature>
<feature type="binding site" evidence="1">
    <location>
        <position position="138"/>
    </location>
    <ligand>
        <name>substrate</name>
    </ligand>
</feature>
<feature type="binding site" evidence="1">
    <location>
        <position position="227"/>
    </location>
    <ligand>
        <name>Mg(2+)</name>
        <dbReference type="ChEBI" id="CHEBI:18420"/>
    </ligand>
</feature>
<feature type="binding site" evidence="1">
    <location>
        <position position="227"/>
    </location>
    <ligand>
        <name>substrate</name>
    </ligand>
</feature>
<feature type="binding site" evidence="1">
    <location>
        <position position="251"/>
    </location>
    <ligand>
        <name>Mg(2+)</name>
        <dbReference type="ChEBI" id="CHEBI:18420"/>
    </ligand>
</feature>
<feature type="binding site" evidence="1">
    <location>
        <position position="255"/>
    </location>
    <ligand>
        <name>Mg(2+)</name>
        <dbReference type="ChEBI" id="CHEBI:18420"/>
    </ligand>
</feature>
<feature type="binding site" evidence="1">
    <location>
        <begin position="285"/>
        <end position="297"/>
    </location>
    <ligand>
        <name>NAD(+)</name>
        <dbReference type="ChEBI" id="CHEBI:57540"/>
    </ligand>
</feature>
<feature type="site" description="Important for catalysis" evidence="1">
    <location>
        <position position="145"/>
    </location>
</feature>
<feature type="site" description="Important for catalysis" evidence="1">
    <location>
        <position position="195"/>
    </location>
</feature>
<protein>
    <recommendedName>
        <fullName evidence="1">3-isopropylmalate dehydrogenase</fullName>
        <ecNumber evidence="1">1.1.1.85</ecNumber>
    </recommendedName>
    <alternativeName>
        <fullName evidence="1">3-IPM-DH</fullName>
    </alternativeName>
    <alternativeName>
        <fullName evidence="1">Beta-IPM dehydrogenase</fullName>
        <shortName evidence="1">IMDH</shortName>
    </alternativeName>
</protein>
<accession>Q493R1</accession>
<dbReference type="EC" id="1.1.1.85" evidence="1"/>
<dbReference type="EMBL" id="CP000016">
    <property type="protein sequence ID" value="AAZ40776.1"/>
    <property type="molecule type" value="Genomic_DNA"/>
</dbReference>
<dbReference type="RefSeq" id="WP_011282683.1">
    <property type="nucleotide sequence ID" value="NC_007292.1"/>
</dbReference>
<dbReference type="SMR" id="Q493R1"/>
<dbReference type="STRING" id="291272.BPEN_136"/>
<dbReference type="KEGG" id="bpn:BPEN_136"/>
<dbReference type="eggNOG" id="COG0473">
    <property type="taxonomic scope" value="Bacteria"/>
</dbReference>
<dbReference type="HOGENOM" id="CLU_031953_0_3_6"/>
<dbReference type="OrthoDB" id="9767905at2"/>
<dbReference type="UniPathway" id="UPA00048">
    <property type="reaction ID" value="UER00072"/>
</dbReference>
<dbReference type="Proteomes" id="UP000007794">
    <property type="component" value="Chromosome"/>
</dbReference>
<dbReference type="GO" id="GO:0005829">
    <property type="term" value="C:cytosol"/>
    <property type="evidence" value="ECO:0007669"/>
    <property type="project" value="TreeGrafter"/>
</dbReference>
<dbReference type="GO" id="GO:0003862">
    <property type="term" value="F:3-isopropylmalate dehydrogenase activity"/>
    <property type="evidence" value="ECO:0007669"/>
    <property type="project" value="UniProtKB-UniRule"/>
</dbReference>
<dbReference type="GO" id="GO:0000287">
    <property type="term" value="F:magnesium ion binding"/>
    <property type="evidence" value="ECO:0007669"/>
    <property type="project" value="InterPro"/>
</dbReference>
<dbReference type="GO" id="GO:0051287">
    <property type="term" value="F:NAD binding"/>
    <property type="evidence" value="ECO:0007669"/>
    <property type="project" value="InterPro"/>
</dbReference>
<dbReference type="GO" id="GO:0009098">
    <property type="term" value="P:L-leucine biosynthetic process"/>
    <property type="evidence" value="ECO:0007669"/>
    <property type="project" value="UniProtKB-UniRule"/>
</dbReference>
<dbReference type="FunFam" id="3.40.718.10:FF:000006">
    <property type="entry name" value="3-isopropylmalate dehydrogenase"/>
    <property type="match status" value="1"/>
</dbReference>
<dbReference type="Gene3D" id="3.40.718.10">
    <property type="entry name" value="Isopropylmalate Dehydrogenase"/>
    <property type="match status" value="1"/>
</dbReference>
<dbReference type="HAMAP" id="MF_01033">
    <property type="entry name" value="LeuB_type1"/>
    <property type="match status" value="1"/>
</dbReference>
<dbReference type="InterPro" id="IPR019818">
    <property type="entry name" value="IsoCit/isopropylmalate_DH_CS"/>
</dbReference>
<dbReference type="InterPro" id="IPR024084">
    <property type="entry name" value="IsoPropMal-DH-like_dom"/>
</dbReference>
<dbReference type="InterPro" id="IPR004429">
    <property type="entry name" value="Isopropylmalate_DH"/>
</dbReference>
<dbReference type="NCBIfam" id="TIGR00169">
    <property type="entry name" value="leuB"/>
    <property type="match status" value="1"/>
</dbReference>
<dbReference type="PANTHER" id="PTHR42979">
    <property type="entry name" value="3-ISOPROPYLMALATE DEHYDROGENASE"/>
    <property type="match status" value="1"/>
</dbReference>
<dbReference type="PANTHER" id="PTHR42979:SF1">
    <property type="entry name" value="3-ISOPROPYLMALATE DEHYDROGENASE"/>
    <property type="match status" value="1"/>
</dbReference>
<dbReference type="Pfam" id="PF00180">
    <property type="entry name" value="Iso_dh"/>
    <property type="match status" value="1"/>
</dbReference>
<dbReference type="SMART" id="SM01329">
    <property type="entry name" value="Iso_dh"/>
    <property type="match status" value="1"/>
</dbReference>
<dbReference type="SUPFAM" id="SSF53659">
    <property type="entry name" value="Isocitrate/Isopropylmalate dehydrogenase-like"/>
    <property type="match status" value="1"/>
</dbReference>
<dbReference type="PROSITE" id="PS00470">
    <property type="entry name" value="IDH_IMDH"/>
    <property type="match status" value="1"/>
</dbReference>
<gene>
    <name evidence="1" type="primary">leuB</name>
    <name type="ordered locus">BPEN_136</name>
</gene>